<proteinExistence type="inferred from homology"/>
<evidence type="ECO:0000255" key="1">
    <source>
        <dbReference type="HAMAP-Rule" id="MF_00442"/>
    </source>
</evidence>
<evidence type="ECO:0000256" key="2">
    <source>
        <dbReference type="SAM" id="MobiDB-lite"/>
    </source>
</evidence>
<name>HELS_METAR</name>
<organism>
    <name type="scientific">Methanocella arvoryzae (strain DSM 22066 / NBRC 105507 / MRE50)</name>
    <dbReference type="NCBI Taxonomy" id="351160"/>
    <lineage>
        <taxon>Archaea</taxon>
        <taxon>Methanobacteriati</taxon>
        <taxon>Methanobacteriota</taxon>
        <taxon>Stenosarchaea group</taxon>
        <taxon>Methanomicrobia</taxon>
        <taxon>Methanocellales</taxon>
        <taxon>Methanocellaceae</taxon>
        <taxon>Methanocella</taxon>
    </lineage>
</organism>
<reference key="1">
    <citation type="journal article" date="2006" name="Science">
        <title>Genome of rice cluster I archaea -- the key methane producers in the rice rhizosphere.</title>
        <authorList>
            <person name="Erkel C."/>
            <person name="Kube M."/>
            <person name="Reinhardt R."/>
            <person name="Liesack W."/>
        </authorList>
    </citation>
    <scope>NUCLEOTIDE SEQUENCE [LARGE SCALE GENOMIC DNA]</scope>
    <source>
        <strain>DSM 22066 / NBRC 105507 / MRE50</strain>
    </source>
</reference>
<sequence>MKIAELNLPQALKDFYTGSGIPELYPPQAEAIRQGLLDGKNLLAAIPTASGKTLLAEMAMLKSIAEGGKAIYIVPLKALASEKYDRFLEFSKLPIKPDGVKVGIATGDFDSRDEYLGEKDIIVATSEKTDSLLRNGASWLSGLSVVVADEVHLIDSPNRGPTLEVTLAKLRKINVNLQILALSATIGNAKALAKWMDAALVQSEWRPTTLKEGVFYGRAITFKKEKRTVNNAGPDEVNSLVADTLEEGGQCLVFANTRKSSESIAQKVARSLSKKLQPAEKEQLAKLKQDVLRHAETDTCEKLAECVGNGVAFHHAGLKGEHRRIVEDGFRQNILKVIACTPTLAAGLNLPARRVIIRDYKRFDVNYGSVPIPVLEYKQMAGRAGRPRLDPYGEAVLIAKNYDEFGELMENYINADPEHITSKLGTEPAMRAHALSAVATDFCRSRQDLKAFMDTTFFAYQRGDLSHVIDNVLNFLLEENMIIESKGGSLKATDLGSLVSKLYIDPLSAALIAEGLEKAKKRPDVAEFGLLHLICSTPDVKSLYLRRGDYSWIIRYADEHASDFLSDVPDSYGDDVEFEQFLAGVKTAALAEMWINEKSEEAITTFFNIGPGDIRNLMETCTWLMHGTAEISALLGAPATRTARELAIRIENGASRELLDLITLKGVGRVRARKLYDAGYTSRDKLKAAEIPAIAAIPGIGDKLAVSIMSQLGRKVDHTPPETEEQPQVSGQSTLFSFDG</sequence>
<keyword id="KW-0067">ATP-binding</keyword>
<keyword id="KW-0227">DNA damage</keyword>
<keyword id="KW-0234">DNA repair</keyword>
<keyword id="KW-0238">DNA-binding</keyword>
<keyword id="KW-0347">Helicase</keyword>
<keyword id="KW-0378">Hydrolase</keyword>
<keyword id="KW-0413">Isomerase</keyword>
<keyword id="KW-0547">Nucleotide-binding</keyword>
<keyword id="KW-1185">Reference proteome</keyword>
<dbReference type="EC" id="5.6.2.4" evidence="1"/>
<dbReference type="EMBL" id="AM114193">
    <property type="protein sequence ID" value="CAJ35982.1"/>
    <property type="molecule type" value="Genomic_DNA"/>
</dbReference>
<dbReference type="RefSeq" id="WP_012036523.1">
    <property type="nucleotide sequence ID" value="NC_009464.1"/>
</dbReference>
<dbReference type="SMR" id="Q0W6L1"/>
<dbReference type="STRING" id="351160.RCIX575"/>
<dbReference type="GeneID" id="5144228"/>
<dbReference type="KEGG" id="rci:RCIX575"/>
<dbReference type="PATRIC" id="fig|351160.9.peg.2253"/>
<dbReference type="eggNOG" id="arCOG00553">
    <property type="taxonomic scope" value="Archaea"/>
</dbReference>
<dbReference type="OrthoDB" id="371946at2157"/>
<dbReference type="Proteomes" id="UP000000663">
    <property type="component" value="Chromosome"/>
</dbReference>
<dbReference type="GO" id="GO:0043138">
    <property type="term" value="F:3'-5' DNA helicase activity"/>
    <property type="evidence" value="ECO:0007669"/>
    <property type="project" value="UniProtKB-UniRule"/>
</dbReference>
<dbReference type="GO" id="GO:0005524">
    <property type="term" value="F:ATP binding"/>
    <property type="evidence" value="ECO:0007669"/>
    <property type="project" value="UniProtKB-UniRule"/>
</dbReference>
<dbReference type="GO" id="GO:0016887">
    <property type="term" value="F:ATP hydrolysis activity"/>
    <property type="evidence" value="ECO:0007669"/>
    <property type="project" value="RHEA"/>
</dbReference>
<dbReference type="GO" id="GO:0003677">
    <property type="term" value="F:DNA binding"/>
    <property type="evidence" value="ECO:0007669"/>
    <property type="project" value="UniProtKB-UniRule"/>
</dbReference>
<dbReference type="GO" id="GO:0006281">
    <property type="term" value="P:DNA repair"/>
    <property type="evidence" value="ECO:0007669"/>
    <property type="project" value="UniProtKB-UniRule"/>
</dbReference>
<dbReference type="CDD" id="cd18028">
    <property type="entry name" value="DEXHc_archSki2"/>
    <property type="match status" value="1"/>
</dbReference>
<dbReference type="CDD" id="cd18795">
    <property type="entry name" value="SF2_C_Ski2"/>
    <property type="match status" value="1"/>
</dbReference>
<dbReference type="Gene3D" id="1.10.3380.30">
    <property type="match status" value="1"/>
</dbReference>
<dbReference type="Gene3D" id="1.10.150.20">
    <property type="entry name" value="5' to 3' exonuclease, C-terminal subdomain"/>
    <property type="match status" value="1"/>
</dbReference>
<dbReference type="Gene3D" id="3.40.50.300">
    <property type="entry name" value="P-loop containing nucleotide triphosphate hydrolases"/>
    <property type="match status" value="2"/>
</dbReference>
<dbReference type="HAMAP" id="MF_00442">
    <property type="entry name" value="Helicase_Hel308"/>
    <property type="match status" value="1"/>
</dbReference>
<dbReference type="InterPro" id="IPR011545">
    <property type="entry name" value="DEAD/DEAH_box_helicase_dom"/>
</dbReference>
<dbReference type="InterPro" id="IPR048772">
    <property type="entry name" value="Hel308-like_dom4"/>
</dbReference>
<dbReference type="InterPro" id="IPR050474">
    <property type="entry name" value="Hel308_SKI2-like"/>
</dbReference>
<dbReference type="InterPro" id="IPR014001">
    <property type="entry name" value="Helicase_ATP-bd"/>
</dbReference>
<dbReference type="InterPro" id="IPR001650">
    <property type="entry name" value="Helicase_C-like"/>
</dbReference>
<dbReference type="InterPro" id="IPR022965">
    <property type="entry name" value="Helicase_Hel308"/>
</dbReference>
<dbReference type="InterPro" id="IPR046931">
    <property type="entry name" value="HTH_61"/>
</dbReference>
<dbReference type="InterPro" id="IPR027417">
    <property type="entry name" value="P-loop_NTPase"/>
</dbReference>
<dbReference type="InterPro" id="IPR036390">
    <property type="entry name" value="WH_DNA-bd_sf"/>
</dbReference>
<dbReference type="NCBIfam" id="NF002654">
    <property type="entry name" value="PRK02362.1"/>
    <property type="match status" value="1"/>
</dbReference>
<dbReference type="PANTHER" id="PTHR47961:SF10">
    <property type="entry name" value="ATP-DEPENDENT DNA HELICASE HEL308"/>
    <property type="match status" value="1"/>
</dbReference>
<dbReference type="PANTHER" id="PTHR47961">
    <property type="entry name" value="DNA POLYMERASE THETA, PUTATIVE (AFU_ORTHOLOGUE AFUA_1G05260)-RELATED"/>
    <property type="match status" value="1"/>
</dbReference>
<dbReference type="Pfam" id="PF00270">
    <property type="entry name" value="DEAD"/>
    <property type="match status" value="1"/>
</dbReference>
<dbReference type="Pfam" id="PF00271">
    <property type="entry name" value="Helicase_C"/>
    <property type="match status" value="1"/>
</dbReference>
<dbReference type="Pfam" id="PF21280">
    <property type="entry name" value="Helicase_dom4_arc"/>
    <property type="match status" value="1"/>
</dbReference>
<dbReference type="Pfam" id="PF14520">
    <property type="entry name" value="HHH_5"/>
    <property type="match status" value="1"/>
</dbReference>
<dbReference type="Pfam" id="PF20470">
    <property type="entry name" value="HTH_61"/>
    <property type="match status" value="1"/>
</dbReference>
<dbReference type="SMART" id="SM00487">
    <property type="entry name" value="DEXDc"/>
    <property type="match status" value="1"/>
</dbReference>
<dbReference type="SMART" id="SM00490">
    <property type="entry name" value="HELICc"/>
    <property type="match status" value="1"/>
</dbReference>
<dbReference type="SUPFAM" id="SSF52540">
    <property type="entry name" value="P-loop containing nucleoside triphosphate hydrolases"/>
    <property type="match status" value="1"/>
</dbReference>
<dbReference type="SUPFAM" id="SSF158702">
    <property type="entry name" value="Sec63 N-terminal domain-like"/>
    <property type="match status" value="1"/>
</dbReference>
<dbReference type="SUPFAM" id="SSF46785">
    <property type="entry name" value="Winged helix' DNA-binding domain"/>
    <property type="match status" value="1"/>
</dbReference>
<dbReference type="PROSITE" id="PS51192">
    <property type="entry name" value="HELICASE_ATP_BIND_1"/>
    <property type="match status" value="1"/>
</dbReference>
<dbReference type="PROSITE" id="PS51194">
    <property type="entry name" value="HELICASE_CTER"/>
    <property type="match status" value="1"/>
</dbReference>
<protein>
    <recommendedName>
        <fullName evidence="1">ATP-dependent DNA helicase Hel308</fullName>
        <ecNumber evidence="1">5.6.2.4</ecNumber>
    </recommendedName>
    <alternativeName>
        <fullName evidence="1">DNA 3'-5' helicase Hel308</fullName>
    </alternativeName>
</protein>
<feature type="chain" id="PRO_1000124587" description="ATP-dependent DNA helicase Hel308">
    <location>
        <begin position="1"/>
        <end position="740"/>
    </location>
</feature>
<feature type="domain" description="Helicase ATP-binding" evidence="1">
    <location>
        <begin position="33"/>
        <end position="204"/>
    </location>
</feature>
<feature type="domain" description="Helicase C-terminal" evidence="1">
    <location>
        <begin position="236"/>
        <end position="436"/>
    </location>
</feature>
<feature type="region of interest" description="Disordered" evidence="2">
    <location>
        <begin position="716"/>
        <end position="740"/>
    </location>
</feature>
<feature type="short sequence motif" description="DEAH box" evidence="1">
    <location>
        <begin position="149"/>
        <end position="152"/>
    </location>
</feature>
<feature type="compositionally biased region" description="Polar residues" evidence="2">
    <location>
        <begin position="726"/>
        <end position="740"/>
    </location>
</feature>
<feature type="binding site" evidence="1">
    <location>
        <position position="28"/>
    </location>
    <ligand>
        <name>ATP</name>
        <dbReference type="ChEBI" id="CHEBI:30616"/>
    </ligand>
</feature>
<feature type="binding site" evidence="1">
    <location>
        <begin position="46"/>
        <end position="53"/>
    </location>
    <ligand>
        <name>ATP</name>
        <dbReference type="ChEBI" id="CHEBI:30616"/>
    </ligand>
</feature>
<comment type="function">
    <text evidence="1">DNA-dependent ATPase and 3'-5' DNA helicase that may be involved in repair of stalled replication forks.</text>
</comment>
<comment type="catalytic activity">
    <reaction evidence="1">
        <text>Couples ATP hydrolysis with the unwinding of duplex DNA by translocating in the 3'-5' direction.</text>
        <dbReference type="EC" id="5.6.2.4"/>
    </reaction>
</comment>
<comment type="catalytic activity">
    <reaction evidence="1">
        <text>ATP + H2O = ADP + phosphate + H(+)</text>
        <dbReference type="Rhea" id="RHEA:13065"/>
        <dbReference type="ChEBI" id="CHEBI:15377"/>
        <dbReference type="ChEBI" id="CHEBI:15378"/>
        <dbReference type="ChEBI" id="CHEBI:30616"/>
        <dbReference type="ChEBI" id="CHEBI:43474"/>
        <dbReference type="ChEBI" id="CHEBI:456216"/>
        <dbReference type="EC" id="5.6.2.4"/>
    </reaction>
</comment>
<comment type="subunit">
    <text evidence="1">Monomer.</text>
</comment>
<comment type="similarity">
    <text evidence="1">Belongs to the helicase family. Hel308 subfamily.</text>
</comment>
<accession>Q0W6L1</accession>
<gene>
    <name evidence="1" type="primary">hel308</name>
    <name type="ordered locus">UNCMA_22030</name>
    <name type="ORF">RCIX575</name>
</gene>